<evidence type="ECO:0000255" key="1">
    <source>
        <dbReference type="HAMAP-Rule" id="MF_01343"/>
    </source>
</evidence>
<evidence type="ECO:0000305" key="2"/>
<sequence length="89" mass="10601">MALTQERKNEIINEFKTHENDTGSPEVQVAILTEQINTLNEHLRTHKKDHHSRRGLLKMVGQRRNLLTYLRNKDVTRYRNLVDKLGLRR</sequence>
<reference key="1">
    <citation type="journal article" date="2000" name="Nucleic Acids Res.">
        <title>Complete genome sequence of the alkaliphilic bacterium Bacillus halodurans and genomic sequence comparison with Bacillus subtilis.</title>
        <authorList>
            <person name="Takami H."/>
            <person name="Nakasone K."/>
            <person name="Takaki Y."/>
            <person name="Maeno G."/>
            <person name="Sasaki R."/>
            <person name="Masui N."/>
            <person name="Fuji F."/>
            <person name="Hirama C."/>
            <person name="Nakamura Y."/>
            <person name="Ogasawara N."/>
            <person name="Kuhara S."/>
            <person name="Horikoshi K."/>
        </authorList>
    </citation>
    <scope>NUCLEOTIDE SEQUENCE [LARGE SCALE GENOMIC DNA]</scope>
    <source>
        <strain>ATCC BAA-125 / DSM 18197 / FERM 7344 / JCM 9153 / C-125</strain>
    </source>
</reference>
<accession>Q9KA82</accession>
<proteinExistence type="inferred from homology"/>
<gene>
    <name evidence="1" type="primary">rpsO</name>
    <name type="ordered locus">BH2408</name>
</gene>
<organism>
    <name type="scientific">Halalkalibacterium halodurans (strain ATCC BAA-125 / DSM 18197 / FERM 7344 / JCM 9153 / C-125)</name>
    <name type="common">Bacillus halodurans</name>
    <dbReference type="NCBI Taxonomy" id="272558"/>
    <lineage>
        <taxon>Bacteria</taxon>
        <taxon>Bacillati</taxon>
        <taxon>Bacillota</taxon>
        <taxon>Bacilli</taxon>
        <taxon>Bacillales</taxon>
        <taxon>Bacillaceae</taxon>
        <taxon>Halalkalibacterium (ex Joshi et al. 2022)</taxon>
    </lineage>
</organism>
<comment type="function">
    <text evidence="1">One of the primary rRNA binding proteins, it binds directly to 16S rRNA where it helps nucleate assembly of the platform of the 30S subunit by binding and bridging several RNA helices of the 16S rRNA.</text>
</comment>
<comment type="function">
    <text evidence="1">Forms an intersubunit bridge (bridge B4) with the 23S rRNA of the 50S subunit in the ribosome.</text>
</comment>
<comment type="subunit">
    <text evidence="1">Part of the 30S ribosomal subunit. Forms a bridge to the 50S subunit in the 70S ribosome, contacting the 23S rRNA.</text>
</comment>
<comment type="similarity">
    <text evidence="1">Belongs to the universal ribosomal protein uS15 family.</text>
</comment>
<dbReference type="EMBL" id="BA000004">
    <property type="protein sequence ID" value="BAB06127.1"/>
    <property type="molecule type" value="Genomic_DNA"/>
</dbReference>
<dbReference type="PIR" id="H83950">
    <property type="entry name" value="H83950"/>
</dbReference>
<dbReference type="RefSeq" id="WP_010898561.1">
    <property type="nucleotide sequence ID" value="NC_002570.2"/>
</dbReference>
<dbReference type="SMR" id="Q9KA82"/>
<dbReference type="STRING" id="272558.gene:10728306"/>
<dbReference type="GeneID" id="87597928"/>
<dbReference type="KEGG" id="bha:BH2408"/>
<dbReference type="eggNOG" id="COG0184">
    <property type="taxonomic scope" value="Bacteria"/>
</dbReference>
<dbReference type="HOGENOM" id="CLU_148518_0_0_9"/>
<dbReference type="OrthoDB" id="9799262at2"/>
<dbReference type="Proteomes" id="UP000001258">
    <property type="component" value="Chromosome"/>
</dbReference>
<dbReference type="GO" id="GO:0022627">
    <property type="term" value="C:cytosolic small ribosomal subunit"/>
    <property type="evidence" value="ECO:0007669"/>
    <property type="project" value="TreeGrafter"/>
</dbReference>
<dbReference type="GO" id="GO:0019843">
    <property type="term" value="F:rRNA binding"/>
    <property type="evidence" value="ECO:0007669"/>
    <property type="project" value="UniProtKB-UniRule"/>
</dbReference>
<dbReference type="GO" id="GO:0003735">
    <property type="term" value="F:structural constituent of ribosome"/>
    <property type="evidence" value="ECO:0007669"/>
    <property type="project" value="InterPro"/>
</dbReference>
<dbReference type="GO" id="GO:0006412">
    <property type="term" value="P:translation"/>
    <property type="evidence" value="ECO:0007669"/>
    <property type="project" value="UniProtKB-UniRule"/>
</dbReference>
<dbReference type="CDD" id="cd00353">
    <property type="entry name" value="Ribosomal_S15p_S13e"/>
    <property type="match status" value="1"/>
</dbReference>
<dbReference type="FunFam" id="1.10.287.10:FF:000002">
    <property type="entry name" value="30S ribosomal protein S15"/>
    <property type="match status" value="1"/>
</dbReference>
<dbReference type="Gene3D" id="6.10.250.3130">
    <property type="match status" value="1"/>
</dbReference>
<dbReference type="Gene3D" id="1.10.287.10">
    <property type="entry name" value="S15/NS1, RNA-binding"/>
    <property type="match status" value="1"/>
</dbReference>
<dbReference type="HAMAP" id="MF_01343_B">
    <property type="entry name" value="Ribosomal_uS15_B"/>
    <property type="match status" value="1"/>
</dbReference>
<dbReference type="InterPro" id="IPR000589">
    <property type="entry name" value="Ribosomal_uS15"/>
</dbReference>
<dbReference type="InterPro" id="IPR005290">
    <property type="entry name" value="Ribosomal_uS15_bac-type"/>
</dbReference>
<dbReference type="InterPro" id="IPR009068">
    <property type="entry name" value="uS15_NS1_RNA-bd_sf"/>
</dbReference>
<dbReference type="NCBIfam" id="TIGR00952">
    <property type="entry name" value="S15_bact"/>
    <property type="match status" value="1"/>
</dbReference>
<dbReference type="PANTHER" id="PTHR23321">
    <property type="entry name" value="RIBOSOMAL PROTEIN S15, BACTERIAL AND ORGANELLAR"/>
    <property type="match status" value="1"/>
</dbReference>
<dbReference type="PANTHER" id="PTHR23321:SF26">
    <property type="entry name" value="SMALL RIBOSOMAL SUBUNIT PROTEIN US15M"/>
    <property type="match status" value="1"/>
</dbReference>
<dbReference type="Pfam" id="PF00312">
    <property type="entry name" value="Ribosomal_S15"/>
    <property type="match status" value="1"/>
</dbReference>
<dbReference type="SMART" id="SM01387">
    <property type="entry name" value="Ribosomal_S15"/>
    <property type="match status" value="1"/>
</dbReference>
<dbReference type="SUPFAM" id="SSF47060">
    <property type="entry name" value="S15/NS1 RNA-binding domain"/>
    <property type="match status" value="1"/>
</dbReference>
<dbReference type="PROSITE" id="PS00362">
    <property type="entry name" value="RIBOSOMAL_S15"/>
    <property type="match status" value="1"/>
</dbReference>
<keyword id="KW-1185">Reference proteome</keyword>
<keyword id="KW-0687">Ribonucleoprotein</keyword>
<keyword id="KW-0689">Ribosomal protein</keyword>
<keyword id="KW-0694">RNA-binding</keyword>
<keyword id="KW-0699">rRNA-binding</keyword>
<feature type="chain" id="PRO_0000115378" description="Small ribosomal subunit protein uS15">
    <location>
        <begin position="1"/>
        <end position="89"/>
    </location>
</feature>
<name>RS15_HALH5</name>
<protein>
    <recommendedName>
        <fullName evidence="1">Small ribosomal subunit protein uS15</fullName>
    </recommendedName>
    <alternativeName>
        <fullName evidence="2">30S ribosomal protein S15</fullName>
    </alternativeName>
</protein>